<protein>
    <recommendedName>
        <fullName>Trifunctional enzyme subunit alpha, mitochondrial</fullName>
    </recommendedName>
    <alternativeName>
        <fullName evidence="1">Monolysocardiolipin acyltransferase</fullName>
        <shortName evidence="5">MLCL AT</shortName>
        <ecNumber evidence="1">2.3.1.-</ecNumber>
    </alternativeName>
    <alternativeName>
        <fullName>TP-alpha</fullName>
    </alternativeName>
    <domain>
        <recommendedName>
            <fullName>Long-chain enoyl-CoA hydratase</fullName>
            <ecNumber evidence="1">4.2.1.17</ecNumber>
        </recommendedName>
    </domain>
    <domain>
        <recommendedName>
            <fullName>Long chain 3-hydroxyacyl-CoA dehydrogenase</fullName>
            <ecNumber evidence="1">1.1.1.211</ecNumber>
        </recommendedName>
    </domain>
</protein>
<organism>
    <name type="scientific">Rattus norvegicus</name>
    <name type="common">Rat</name>
    <dbReference type="NCBI Taxonomy" id="10116"/>
    <lineage>
        <taxon>Eukaryota</taxon>
        <taxon>Metazoa</taxon>
        <taxon>Chordata</taxon>
        <taxon>Craniata</taxon>
        <taxon>Vertebrata</taxon>
        <taxon>Euteleostomi</taxon>
        <taxon>Mammalia</taxon>
        <taxon>Eutheria</taxon>
        <taxon>Euarchontoglires</taxon>
        <taxon>Glires</taxon>
        <taxon>Rodentia</taxon>
        <taxon>Myomorpha</taxon>
        <taxon>Muroidea</taxon>
        <taxon>Muridae</taxon>
        <taxon>Murinae</taxon>
        <taxon>Rattus</taxon>
    </lineage>
</organism>
<reference key="1">
    <citation type="journal article" date="1993" name="J. Biol. Chem.">
        <title>Molecular cloning of the cDNAs for the subunits of rat mitochondrial fatty acid beta-oxidation multienzyme complex. Structural and functional relationships to other mitochondrial and peroxisomal beta-oxidation enzymes.</title>
        <authorList>
            <person name="Kamijo T."/>
            <person name="Aoyama T."/>
            <person name="Miyazaki J."/>
            <person name="Hashimoto T."/>
        </authorList>
    </citation>
    <scope>NUCLEOTIDE SEQUENCE [MRNA]</scope>
    <source>
        <strain>Wistar</strain>
    </source>
</reference>
<reference key="2">
    <citation type="journal article" date="2004" name="Genome Res.">
        <title>The status, quality, and expansion of the NIH full-length cDNA project: the Mammalian Gene Collection (MGC).</title>
        <authorList>
            <consortium name="The MGC Project Team"/>
        </authorList>
    </citation>
    <scope>NUCLEOTIDE SEQUENCE [LARGE SCALE MRNA]</scope>
    <source>
        <tissue>Ovary</tissue>
    </source>
</reference>
<reference key="3">
    <citation type="journal article" date="1992" name="J. Biol. Chem.">
        <title>Novel fatty acid beta-oxidation enzymes in rat liver mitochondria. II. Purification and properties of enoyl-coenzyme A (CoA) hydratase/3-hydroxyacyl-CoA dehydrogenase/3-ketoacyl-CoA thiolase trifunctional protein.</title>
        <authorList>
            <person name="Uchida Y."/>
            <person name="Izai K."/>
            <person name="Orii T."/>
            <person name="Hashimoto T."/>
        </authorList>
    </citation>
    <scope>SUBUNIT</scope>
</reference>
<reference key="4">
    <citation type="journal article" date="2012" name="Nat. Commun.">
        <title>Quantitative maps of protein phosphorylation sites across 14 different rat organs and tissues.</title>
        <authorList>
            <person name="Lundby A."/>
            <person name="Secher A."/>
            <person name="Lage K."/>
            <person name="Nordsborg N.B."/>
            <person name="Dmytriyev A."/>
            <person name="Lundby C."/>
            <person name="Olsen J.V."/>
        </authorList>
    </citation>
    <scope>PHOSPHORYLATION [LARGE SCALE ANALYSIS] AT SER-419 AND SER-650</scope>
    <scope>IDENTIFICATION BY MASS SPECTROMETRY [LARGE SCALE ANALYSIS]</scope>
</reference>
<proteinExistence type="evidence at protein level"/>
<accession>Q64428</accession>
<accession>Q5BIZ5</accession>
<sequence>MVASRAIGSLSRFSAFRILRSRGCICHSFTTSSALLSRTHINYGVKGDVAVIRINSPNSKVNTLNKEVQSEFVEVMNEIWANDQIRSAVLISSKPGCFVAGADINMLASCTTPQEAARISQEGQKMFEKLEKSPKPVVAAISGSCLGGGLELAIACQYRIATKDRKTVLGVPEVLLGILPGAGGTQRLPKMVGVPAAFDMMLTGRNIRADRAKKMGLVDQLVDPLGPGIKSPEERTIEYLEEVAVNFAKGLADRKVSAKQSKGLMEKLTSYAMTIPFVRQQVYKTVEEKVKKQTKGLYPAPLKIIDAVKTGLEQGNDAGYLAESEKFGELALTKESKALMGLYNGQVLCKKNKFGAPQKTVQQLAILGAGLMGAGIAQVSVDKGLKTLLKDTTVTGLGRGQQQVFKGLNDKVKKKALTSFERDSIFSNLIGQLDYKGFEKADMVIEAVFEDLAVKHKVLKEVESVTPEHCIFASNTSALPINQIAAVSQRPEKVIGMHYFSPVDKMQLLEIITTDKTSKDTTASAVAVGLKQGKVIIVVKDGPGFYTTRCLAPMMSEVIRILQEGVDPKKLDALTTGFGFPVGAATLADEVGIDVAQHVAEDLGKAFGERFGGGSVELLKLMVSKGFLGRKSGKGFYIYQSGSKNKNLNSEIDNILVNLRLPAKPEVSSDEDIQYRVITRFVNEAVLCLQEGILATPEEGDIGAVFGLGFPPCLGGPFRFVDLYGAQKVVDRLRKYESAYGTQFTPCQLLRDLANNSSKKFYQ</sequence>
<feature type="transit peptide" description="Mitochondrion" evidence="3">
    <location>
        <begin position="1"/>
        <end position="36"/>
    </location>
</feature>
<feature type="chain" id="PRO_0000007405" description="Trifunctional enzyme subunit alpha, mitochondrial">
    <location>
        <begin position="37"/>
        <end position="763"/>
    </location>
</feature>
<feature type="active site" description="For hydroxyacyl-coenzyme A dehydrogenase activity" evidence="1">
    <location>
        <position position="510"/>
    </location>
</feature>
<feature type="site" description="Important for long-chain enoyl-CoA hydratase activity" evidence="1">
    <location>
        <position position="151"/>
    </location>
</feature>
<feature type="site" description="Important for long-chain enoyl-CoA hydratase activity" evidence="1">
    <location>
        <position position="173"/>
    </location>
</feature>
<feature type="site" description="Important for hydroxyacyl-coenzyme A dehydrogenase activity" evidence="1">
    <location>
        <position position="498"/>
    </location>
</feature>
<feature type="modified residue" description="N6-acetyllysine; alternate" evidence="2">
    <location>
        <position position="46"/>
    </location>
</feature>
<feature type="modified residue" description="N6-succinyllysine; alternate" evidence="2">
    <location>
        <position position="46"/>
    </location>
</feature>
<feature type="modified residue" description="N6-acetyllysine; alternate" evidence="2">
    <location>
        <position position="60"/>
    </location>
</feature>
<feature type="modified residue" description="N6-succinyllysine; alternate" evidence="2">
    <location>
        <position position="60"/>
    </location>
</feature>
<feature type="modified residue" description="N6-acetyllysine" evidence="2">
    <location>
        <position position="129"/>
    </location>
</feature>
<feature type="modified residue" description="N6-acetyllysine; alternate" evidence="2">
    <location>
        <position position="166"/>
    </location>
</feature>
<feature type="modified residue" description="N6-succinyllysine; alternate" evidence="2">
    <location>
        <position position="166"/>
    </location>
</feature>
<feature type="modified residue" description="N6-succinyllysine" evidence="2">
    <location>
        <position position="213"/>
    </location>
</feature>
<feature type="modified residue" description="N6-acetyllysine; alternate" evidence="2">
    <location>
        <position position="214"/>
    </location>
</feature>
<feature type="modified residue" description="N6-succinyllysine; alternate" evidence="2">
    <location>
        <position position="214"/>
    </location>
</feature>
<feature type="modified residue" description="N6-succinyllysine" evidence="2">
    <location>
        <position position="230"/>
    </location>
</feature>
<feature type="modified residue" description="Phosphoserine" evidence="2">
    <location>
        <position position="231"/>
    </location>
</feature>
<feature type="modified residue" description="N6-acetyllysine; alternate" evidence="2">
    <location>
        <position position="249"/>
    </location>
</feature>
<feature type="modified residue" description="N6-succinyllysine; alternate" evidence="2">
    <location>
        <position position="249"/>
    </location>
</feature>
<feature type="modified residue" description="N6-acetyllysine" evidence="2">
    <location>
        <position position="289"/>
    </location>
</feature>
<feature type="modified residue" description="N6-acetyllysine" evidence="1">
    <location>
        <position position="295"/>
    </location>
</feature>
<feature type="modified residue" description="N6-acetyllysine; alternate" evidence="1">
    <location>
        <position position="303"/>
    </location>
</feature>
<feature type="modified residue" description="N6-succinyllysine; alternate" evidence="2">
    <location>
        <position position="303"/>
    </location>
</feature>
<feature type="modified residue" description="N6-acetyllysine; alternate" evidence="2">
    <location>
        <position position="326"/>
    </location>
</feature>
<feature type="modified residue" description="N6-succinyllysine; alternate" evidence="2">
    <location>
        <position position="326"/>
    </location>
</feature>
<feature type="modified residue" description="N6-acetyllysine; alternate" evidence="2">
    <location>
        <position position="334"/>
    </location>
</feature>
<feature type="modified residue" description="N6-succinyllysine; alternate" evidence="2">
    <location>
        <position position="334"/>
    </location>
</feature>
<feature type="modified residue" description="N6-acetyllysine; alternate" evidence="2">
    <location>
        <position position="350"/>
    </location>
</feature>
<feature type="modified residue" description="N6-succinyllysine; alternate" evidence="2">
    <location>
        <position position="350"/>
    </location>
</feature>
<feature type="modified residue" description="N6-acetyllysine" evidence="2">
    <location>
        <position position="353"/>
    </location>
</feature>
<feature type="modified residue" description="Phosphothreonine" evidence="1">
    <location>
        <position position="395"/>
    </location>
</feature>
<feature type="modified residue" description="Omega-N-methylarginine" evidence="2">
    <location>
        <position position="399"/>
    </location>
</feature>
<feature type="modified residue" description="N6-acetyllysine; alternate" evidence="1">
    <location>
        <position position="406"/>
    </location>
</feature>
<feature type="modified residue" description="N6-succinyllysine; alternate" evidence="2">
    <location>
        <position position="406"/>
    </location>
</feature>
<feature type="modified residue" description="N6-acetyllysine; alternate" evidence="2">
    <location>
        <position position="411"/>
    </location>
</feature>
<feature type="modified residue" description="N6-succinyllysine; alternate" evidence="2">
    <location>
        <position position="411"/>
    </location>
</feature>
<feature type="modified residue" description="N6-succinyllysine" evidence="2">
    <location>
        <position position="415"/>
    </location>
</feature>
<feature type="modified residue" description="Phosphoserine" evidence="6">
    <location>
        <position position="419"/>
    </location>
</feature>
<feature type="modified residue" description="N6-acetyllysine; alternate" evidence="2">
    <location>
        <position position="436"/>
    </location>
</feature>
<feature type="modified residue" description="N6-succinyllysine; alternate" evidence="2">
    <location>
        <position position="436"/>
    </location>
</feature>
<feature type="modified residue" description="N6-succinyllysine" evidence="2">
    <location>
        <position position="440"/>
    </location>
</feature>
<feature type="modified residue" description="N6-acetyllysine; alternate" evidence="2">
    <location>
        <position position="460"/>
    </location>
</feature>
<feature type="modified residue" description="N6-succinyllysine; alternate" evidence="2">
    <location>
        <position position="460"/>
    </location>
</feature>
<feature type="modified residue" description="N6-acetyllysine; alternate" evidence="1">
    <location>
        <position position="505"/>
    </location>
</feature>
<feature type="modified residue" description="N6-succinyllysine; alternate" evidence="2">
    <location>
        <position position="505"/>
    </location>
</feature>
<feature type="modified residue" description="N6-acetyllysine; alternate" evidence="2">
    <location>
        <position position="519"/>
    </location>
</feature>
<feature type="modified residue" description="N6-succinyllysine; alternate" evidence="2">
    <location>
        <position position="519"/>
    </location>
</feature>
<feature type="modified residue" description="N6-acetyllysine" evidence="1">
    <location>
        <position position="540"/>
    </location>
</feature>
<feature type="modified residue" description="N6-acetyllysine; alternate" evidence="2">
    <location>
        <position position="569"/>
    </location>
</feature>
<feature type="modified residue" description="N6-succinyllysine; alternate" evidence="2">
    <location>
        <position position="569"/>
    </location>
</feature>
<feature type="modified residue" description="N6-succinyllysine" evidence="2">
    <location>
        <position position="620"/>
    </location>
</feature>
<feature type="modified residue" description="N6-succinyllysine" evidence="2">
    <location>
        <position position="634"/>
    </location>
</feature>
<feature type="modified residue" description="N6-acetyllysine; alternate" evidence="1">
    <location>
        <position position="644"/>
    </location>
</feature>
<feature type="modified residue" description="N6-succinyllysine; alternate" evidence="2">
    <location>
        <position position="644"/>
    </location>
</feature>
<feature type="modified residue" description="N6-succinyllysine" evidence="2">
    <location>
        <position position="646"/>
    </location>
</feature>
<feature type="modified residue" description="Phosphoserine" evidence="6">
    <location>
        <position position="650"/>
    </location>
</feature>
<feature type="modified residue" description="N6-acetyllysine; alternate" evidence="2">
    <location>
        <position position="664"/>
    </location>
</feature>
<feature type="modified residue" description="N6-succinyllysine; alternate" evidence="2">
    <location>
        <position position="664"/>
    </location>
</feature>
<feature type="modified residue" description="N6-acetyllysine; alternate" evidence="2">
    <location>
        <position position="728"/>
    </location>
</feature>
<feature type="modified residue" description="N6-succinyllysine; alternate" evidence="2">
    <location>
        <position position="728"/>
    </location>
</feature>
<feature type="modified residue" description="N6-acetyllysine" evidence="2">
    <location>
        <position position="735"/>
    </location>
</feature>
<feature type="modified residue" description="N6-acetyllysine; alternate" evidence="2">
    <location>
        <position position="759"/>
    </location>
</feature>
<feature type="modified residue" description="N6-succinyllysine; alternate" evidence="2">
    <location>
        <position position="759"/>
    </location>
</feature>
<name>ECHA_RAT</name>
<gene>
    <name type="primary">Hadha</name>
</gene>
<dbReference type="EC" id="2.3.1.-" evidence="1"/>
<dbReference type="EC" id="4.2.1.17" evidence="1"/>
<dbReference type="EC" id="1.1.1.211" evidence="1"/>
<dbReference type="EMBL" id="D16478">
    <property type="protein sequence ID" value="BAA03939.1"/>
    <property type="status" value="ALT_FRAME"/>
    <property type="molecule type" value="mRNA"/>
</dbReference>
<dbReference type="EMBL" id="BC091697">
    <property type="protein sequence ID" value="AAH91697.1"/>
    <property type="molecule type" value="mRNA"/>
</dbReference>
<dbReference type="PIR" id="A49681">
    <property type="entry name" value="A49681"/>
</dbReference>
<dbReference type="RefSeq" id="NP_570839.2">
    <property type="nucleotide sequence ID" value="NM_130826.2"/>
</dbReference>
<dbReference type="SMR" id="Q64428"/>
<dbReference type="BioGRID" id="250974">
    <property type="interactions" value="6"/>
</dbReference>
<dbReference type="FunCoup" id="Q64428">
    <property type="interactions" value="2186"/>
</dbReference>
<dbReference type="IntAct" id="Q64428">
    <property type="interactions" value="5"/>
</dbReference>
<dbReference type="MINT" id="Q64428"/>
<dbReference type="STRING" id="10116.ENSRNOP00000038073"/>
<dbReference type="CarbonylDB" id="Q64428"/>
<dbReference type="GlyGen" id="Q64428">
    <property type="glycosylation" value="7 sites, 1 O-linked glycan (7 sites)"/>
</dbReference>
<dbReference type="iPTMnet" id="Q64428"/>
<dbReference type="PhosphoSitePlus" id="Q64428"/>
<dbReference type="SwissPalm" id="Q64428"/>
<dbReference type="jPOST" id="Q64428"/>
<dbReference type="PaxDb" id="10116-ENSRNOP00000038073"/>
<dbReference type="Ensembl" id="ENSRNOT00000038649.7">
    <property type="protein sequence ID" value="ENSRNOP00000038073.5"/>
    <property type="gene ID" value="ENSRNOG00000024629.7"/>
</dbReference>
<dbReference type="GeneID" id="170670"/>
<dbReference type="KEGG" id="rno:170670"/>
<dbReference type="UCSC" id="RGD:620512">
    <property type="organism name" value="rat"/>
</dbReference>
<dbReference type="AGR" id="RGD:620512"/>
<dbReference type="CTD" id="3030"/>
<dbReference type="RGD" id="620512">
    <property type="gene designation" value="Hadha"/>
</dbReference>
<dbReference type="eggNOG" id="KOG1683">
    <property type="taxonomic scope" value="Eukaryota"/>
</dbReference>
<dbReference type="GeneTree" id="ENSGT00940000154677"/>
<dbReference type="HOGENOM" id="CLU_009834_16_1_1"/>
<dbReference type="InParanoid" id="Q64428"/>
<dbReference type="OMA" id="ESTTIRW"/>
<dbReference type="OrthoDB" id="10004768at2759"/>
<dbReference type="PhylomeDB" id="Q64428"/>
<dbReference type="BRENDA" id="1.1.1.211">
    <property type="organism ID" value="5301"/>
</dbReference>
<dbReference type="BRENDA" id="2.3.1.16">
    <property type="organism ID" value="5301"/>
</dbReference>
<dbReference type="Reactome" id="R-RNO-1482798">
    <property type="pathway name" value="Acyl chain remodeling of CL"/>
</dbReference>
<dbReference type="Reactome" id="R-RNO-77285">
    <property type="pathway name" value="Beta oxidation of myristoyl-CoA to lauroyl-CoA"/>
</dbReference>
<dbReference type="Reactome" id="R-RNO-77305">
    <property type="pathway name" value="Beta oxidation of palmitoyl-CoA to myristoyl-CoA"/>
</dbReference>
<dbReference type="Reactome" id="R-RNO-77310">
    <property type="pathway name" value="Beta oxidation of lauroyl-CoA to decanoyl-CoA-CoA"/>
</dbReference>
<dbReference type="Reactome" id="R-RNO-77346">
    <property type="pathway name" value="Beta oxidation of decanoyl-CoA to octanoyl-CoA-CoA"/>
</dbReference>
<dbReference type="Reactome" id="R-RNO-77348">
    <property type="pathway name" value="Beta oxidation of octanoyl-CoA to hexanoyl-CoA"/>
</dbReference>
<dbReference type="Reactome" id="R-RNO-77350">
    <property type="pathway name" value="Beta oxidation of hexanoyl-CoA to butanoyl-CoA"/>
</dbReference>
<dbReference type="UniPathway" id="UPA00659"/>
<dbReference type="PRO" id="PR:Q64428"/>
<dbReference type="Proteomes" id="UP000002494">
    <property type="component" value="Chromosome 6"/>
</dbReference>
<dbReference type="Bgee" id="ENSRNOG00000024629">
    <property type="expression patterns" value="Expressed in heart and 19 other cell types or tissues"/>
</dbReference>
<dbReference type="GO" id="GO:0016507">
    <property type="term" value="C:mitochondrial fatty acid beta-oxidation multienzyme complex"/>
    <property type="evidence" value="ECO:0000314"/>
    <property type="project" value="RGD"/>
</dbReference>
<dbReference type="GO" id="GO:0005743">
    <property type="term" value="C:mitochondrial inner membrane"/>
    <property type="evidence" value="ECO:0000266"/>
    <property type="project" value="RGD"/>
</dbReference>
<dbReference type="GO" id="GO:0042645">
    <property type="term" value="C:mitochondrial nucleoid"/>
    <property type="evidence" value="ECO:0000266"/>
    <property type="project" value="RGD"/>
</dbReference>
<dbReference type="GO" id="GO:0005739">
    <property type="term" value="C:mitochondrion"/>
    <property type="evidence" value="ECO:0000266"/>
    <property type="project" value="RGD"/>
</dbReference>
<dbReference type="GO" id="GO:0018812">
    <property type="term" value="F:3-hydroxyacyl-CoA dehydratase activity"/>
    <property type="evidence" value="ECO:0000314"/>
    <property type="project" value="RGD"/>
</dbReference>
<dbReference type="GO" id="GO:0003857">
    <property type="term" value="F:3-hydroxyacyl-CoA dehydrogenase activity"/>
    <property type="evidence" value="ECO:0000314"/>
    <property type="project" value="RGD"/>
</dbReference>
<dbReference type="GO" id="GO:0003988">
    <property type="term" value="F:acetyl-CoA C-acyltransferase activity"/>
    <property type="evidence" value="ECO:0000314"/>
    <property type="project" value="RGD"/>
</dbReference>
<dbReference type="GO" id="GO:0004300">
    <property type="term" value="F:enoyl-CoA hydratase activity"/>
    <property type="evidence" value="ECO:0000314"/>
    <property type="project" value="RGD"/>
</dbReference>
<dbReference type="GO" id="GO:0000062">
    <property type="term" value="F:fatty-acyl-CoA binding"/>
    <property type="evidence" value="ECO:0000314"/>
    <property type="project" value="RGD"/>
</dbReference>
<dbReference type="GO" id="GO:0016509">
    <property type="term" value="F:long-chain-3-hydroxyacyl-CoA dehydrogenase activity"/>
    <property type="evidence" value="ECO:0000314"/>
    <property type="project" value="RGD"/>
</dbReference>
<dbReference type="GO" id="GO:0051287">
    <property type="term" value="F:NAD binding"/>
    <property type="evidence" value="ECO:0000314"/>
    <property type="project" value="RGD"/>
</dbReference>
<dbReference type="GO" id="GO:0070403">
    <property type="term" value="F:NAD+ binding"/>
    <property type="evidence" value="ECO:0007669"/>
    <property type="project" value="InterPro"/>
</dbReference>
<dbReference type="GO" id="GO:0044877">
    <property type="term" value="F:protein-containing complex binding"/>
    <property type="evidence" value="ECO:0000315"/>
    <property type="project" value="RGD"/>
</dbReference>
<dbReference type="GO" id="GO:0035965">
    <property type="term" value="P:cardiolipin acyl-chain remodeling"/>
    <property type="evidence" value="ECO:0000250"/>
    <property type="project" value="UniProtKB"/>
</dbReference>
<dbReference type="GO" id="GO:0006635">
    <property type="term" value="P:fatty acid beta-oxidation"/>
    <property type="evidence" value="ECO:0000314"/>
    <property type="project" value="RGD"/>
</dbReference>
<dbReference type="GO" id="GO:0032868">
    <property type="term" value="P:response to insulin"/>
    <property type="evidence" value="ECO:0000266"/>
    <property type="project" value="RGD"/>
</dbReference>
<dbReference type="GO" id="GO:0009410">
    <property type="term" value="P:response to xenobiotic stimulus"/>
    <property type="evidence" value="ECO:0000314"/>
    <property type="project" value="RGD"/>
</dbReference>
<dbReference type="CDD" id="cd06558">
    <property type="entry name" value="crotonase-like"/>
    <property type="match status" value="1"/>
</dbReference>
<dbReference type="FunFam" id="3.90.226.10:FF:000011">
    <property type="entry name" value="Fatty acid oxidation complex subunit alpha"/>
    <property type="match status" value="1"/>
</dbReference>
<dbReference type="FunFam" id="3.40.50.720:FF:000009">
    <property type="entry name" value="Fatty oxidation complex, alpha subunit"/>
    <property type="match status" value="1"/>
</dbReference>
<dbReference type="FunFam" id="1.10.1040.50:FF:000002">
    <property type="entry name" value="Trifunctional enzyme subunit alpha, mitochondrial"/>
    <property type="match status" value="1"/>
</dbReference>
<dbReference type="Gene3D" id="1.10.1040.50">
    <property type="match status" value="1"/>
</dbReference>
<dbReference type="Gene3D" id="3.90.226.10">
    <property type="entry name" value="2-enoyl-CoA Hydratase, Chain A, domain 1"/>
    <property type="match status" value="1"/>
</dbReference>
<dbReference type="Gene3D" id="3.40.50.720">
    <property type="entry name" value="NAD(P)-binding Rossmann-like Domain"/>
    <property type="match status" value="1"/>
</dbReference>
<dbReference type="InterPro" id="IPR006180">
    <property type="entry name" value="3-OHacyl-CoA_DH_CS"/>
</dbReference>
<dbReference type="InterPro" id="IPR006176">
    <property type="entry name" value="3-OHacyl-CoA_DH_NAD-bd"/>
</dbReference>
<dbReference type="InterPro" id="IPR006108">
    <property type="entry name" value="3HC_DH_C"/>
</dbReference>
<dbReference type="InterPro" id="IPR008927">
    <property type="entry name" value="6-PGluconate_DH-like_C_sf"/>
</dbReference>
<dbReference type="InterPro" id="IPR029045">
    <property type="entry name" value="ClpP/crotonase-like_dom_sf"/>
</dbReference>
<dbReference type="InterPro" id="IPR018376">
    <property type="entry name" value="Enoyl-CoA_hyd/isom_CS"/>
</dbReference>
<dbReference type="InterPro" id="IPR001753">
    <property type="entry name" value="Enoyl-CoA_hydra/iso"/>
</dbReference>
<dbReference type="InterPro" id="IPR012803">
    <property type="entry name" value="Fa_ox_alpha_mit"/>
</dbReference>
<dbReference type="InterPro" id="IPR050136">
    <property type="entry name" value="FA_oxidation_alpha_subunit"/>
</dbReference>
<dbReference type="InterPro" id="IPR036291">
    <property type="entry name" value="NAD(P)-bd_dom_sf"/>
</dbReference>
<dbReference type="NCBIfam" id="TIGR02441">
    <property type="entry name" value="fa_ox_alpha_mit"/>
    <property type="match status" value="1"/>
</dbReference>
<dbReference type="PANTHER" id="PTHR43612">
    <property type="entry name" value="TRIFUNCTIONAL ENZYME SUBUNIT ALPHA"/>
    <property type="match status" value="1"/>
</dbReference>
<dbReference type="PANTHER" id="PTHR43612:SF3">
    <property type="entry name" value="TRIFUNCTIONAL ENZYME SUBUNIT ALPHA, MITOCHONDRIAL"/>
    <property type="match status" value="1"/>
</dbReference>
<dbReference type="Pfam" id="PF00725">
    <property type="entry name" value="3HCDH"/>
    <property type="match status" value="2"/>
</dbReference>
<dbReference type="Pfam" id="PF02737">
    <property type="entry name" value="3HCDH_N"/>
    <property type="match status" value="1"/>
</dbReference>
<dbReference type="Pfam" id="PF00378">
    <property type="entry name" value="ECH_1"/>
    <property type="match status" value="1"/>
</dbReference>
<dbReference type="SUPFAM" id="SSF48179">
    <property type="entry name" value="6-phosphogluconate dehydrogenase C-terminal domain-like"/>
    <property type="match status" value="2"/>
</dbReference>
<dbReference type="SUPFAM" id="SSF52096">
    <property type="entry name" value="ClpP/crotonase"/>
    <property type="match status" value="1"/>
</dbReference>
<dbReference type="SUPFAM" id="SSF51735">
    <property type="entry name" value="NAD(P)-binding Rossmann-fold domains"/>
    <property type="match status" value="1"/>
</dbReference>
<dbReference type="PROSITE" id="PS00067">
    <property type="entry name" value="3HCDH"/>
    <property type="match status" value="1"/>
</dbReference>
<dbReference type="PROSITE" id="PS00166">
    <property type="entry name" value="ENOYL_COA_HYDRATASE"/>
    <property type="match status" value="1"/>
</dbReference>
<keyword id="KW-0007">Acetylation</keyword>
<keyword id="KW-0276">Fatty acid metabolism</keyword>
<keyword id="KW-0443">Lipid metabolism</keyword>
<keyword id="KW-0456">Lyase</keyword>
<keyword id="KW-0472">Membrane</keyword>
<keyword id="KW-0488">Methylation</keyword>
<keyword id="KW-0496">Mitochondrion</keyword>
<keyword id="KW-0999">Mitochondrion inner membrane</keyword>
<keyword id="KW-0511">Multifunctional enzyme</keyword>
<keyword id="KW-0520">NAD</keyword>
<keyword id="KW-0560">Oxidoreductase</keyword>
<keyword id="KW-0597">Phosphoprotein</keyword>
<keyword id="KW-1185">Reference proteome</keyword>
<keyword id="KW-0808">Transferase</keyword>
<keyword id="KW-0809">Transit peptide</keyword>
<evidence type="ECO:0000250" key="1">
    <source>
        <dbReference type="UniProtKB" id="P40939"/>
    </source>
</evidence>
<evidence type="ECO:0000250" key="2">
    <source>
        <dbReference type="UniProtKB" id="Q8BMS1"/>
    </source>
</evidence>
<evidence type="ECO:0000255" key="3"/>
<evidence type="ECO:0000269" key="4">
    <source>
    </source>
</evidence>
<evidence type="ECO:0000305" key="5"/>
<evidence type="ECO:0007744" key="6">
    <source>
    </source>
</evidence>
<comment type="function">
    <text evidence="1">Mitochondrial trifunctional enzyme catalyzes the last three of the four reactions of the mitochondrial beta-oxidation pathway. The mitochondrial beta-oxidation pathway is the major energy-producing process in tissues and is performed through four consecutive reactions breaking down fatty acids into acetyl-CoA. Among the enzymes involved in this pathway, the trifunctional enzyme exhibits specificity for long-chain fatty acids. Mitochondrial trifunctional enzyme is a heterotetrameric complex composed of two proteins, the trifunctional enzyme subunit alpha/HADHA described here carries the 2,3-enoyl-CoA hydratase and the 3-hydroxyacyl-CoA dehydrogenase activities while the trifunctional enzyme subunit beta/HADHB bears the 3-ketoacyl-CoA thiolase activity. Independently of subunit beta, HADHA also exhibits a cardiolipin acyltransferase activity that participates in cardiolipin remodeling; cardiolipin is a major mitochondrial membrane phospholipid. HADHA may act downstream of Tafazzin/TAZ, that remodels monolysocardiolipin (MLCL) to a cardiolipin intermediate, and then HADHA may continue to remodel this species into mature tetralinoleoyl-cardiolipin. Has also been proposed to act directly on MLCL; capable of acylating MLCL using different acyl-CoA substrates, with highest activity for oleoyl-CoA.</text>
</comment>
<comment type="catalytic activity">
    <reaction evidence="1">
        <text>a (3S)-3-hydroxyacyl-CoA = a (2E)-enoyl-CoA + H2O</text>
        <dbReference type="Rhea" id="RHEA:16105"/>
        <dbReference type="ChEBI" id="CHEBI:15377"/>
        <dbReference type="ChEBI" id="CHEBI:57318"/>
        <dbReference type="ChEBI" id="CHEBI:58856"/>
        <dbReference type="EC" id="4.2.1.17"/>
    </reaction>
    <physiologicalReaction direction="right-to-left" evidence="1">
        <dbReference type="Rhea" id="RHEA:16107"/>
    </physiologicalReaction>
</comment>
<comment type="catalytic activity">
    <reaction evidence="1">
        <text>a 4-saturated-(3S)-3-hydroxyacyl-CoA = a (3E)-enoyl-CoA + H2O</text>
        <dbReference type="Rhea" id="RHEA:20724"/>
        <dbReference type="ChEBI" id="CHEBI:15377"/>
        <dbReference type="ChEBI" id="CHEBI:58521"/>
        <dbReference type="ChEBI" id="CHEBI:137480"/>
        <dbReference type="EC" id="4.2.1.17"/>
    </reaction>
    <physiologicalReaction direction="right-to-left" evidence="1">
        <dbReference type="Rhea" id="RHEA:20726"/>
    </physiologicalReaction>
</comment>
<comment type="catalytic activity">
    <reaction evidence="1">
        <text>(3S)-hydroxyoctanoyl-CoA = (2E)-octenoyl-CoA + H2O</text>
        <dbReference type="Rhea" id="RHEA:31199"/>
        <dbReference type="ChEBI" id="CHEBI:15377"/>
        <dbReference type="ChEBI" id="CHEBI:62242"/>
        <dbReference type="ChEBI" id="CHEBI:62617"/>
    </reaction>
    <physiologicalReaction direction="right-to-left" evidence="1">
        <dbReference type="Rhea" id="RHEA:31201"/>
    </physiologicalReaction>
</comment>
<comment type="catalytic activity">
    <reaction evidence="1">
        <text>(3S)-3-hydroxydodecanoyl-CoA = (2E)-dodecenoyl-CoA + H2O</text>
        <dbReference type="Rhea" id="RHEA:31075"/>
        <dbReference type="ChEBI" id="CHEBI:15377"/>
        <dbReference type="ChEBI" id="CHEBI:57330"/>
        <dbReference type="ChEBI" id="CHEBI:62558"/>
    </reaction>
    <physiologicalReaction direction="right-to-left" evidence="1">
        <dbReference type="Rhea" id="RHEA:31077"/>
    </physiologicalReaction>
</comment>
<comment type="catalytic activity">
    <reaction evidence="1">
        <text>(3S)-hydroxyhexadecanoyl-CoA = (2E)-hexadecenoyl-CoA + H2O</text>
        <dbReference type="Rhea" id="RHEA:31163"/>
        <dbReference type="ChEBI" id="CHEBI:15377"/>
        <dbReference type="ChEBI" id="CHEBI:61526"/>
        <dbReference type="ChEBI" id="CHEBI:62613"/>
    </reaction>
    <physiologicalReaction direction="right-to-left" evidence="1">
        <dbReference type="Rhea" id="RHEA:31165"/>
    </physiologicalReaction>
</comment>
<comment type="catalytic activity">
    <reaction evidence="1">
        <text>a long-chain (3S)-3-hydroxy fatty acyl-CoA + NAD(+) = a long-chain 3-oxo-fatty acyl-CoA + NADH + H(+)</text>
        <dbReference type="Rhea" id="RHEA:52656"/>
        <dbReference type="ChEBI" id="CHEBI:15378"/>
        <dbReference type="ChEBI" id="CHEBI:57540"/>
        <dbReference type="ChEBI" id="CHEBI:57945"/>
        <dbReference type="ChEBI" id="CHEBI:136757"/>
        <dbReference type="ChEBI" id="CHEBI:136758"/>
        <dbReference type="EC" id="1.1.1.211"/>
    </reaction>
    <physiologicalReaction direction="left-to-right" evidence="1">
        <dbReference type="Rhea" id="RHEA:52657"/>
    </physiologicalReaction>
</comment>
<comment type="catalytic activity">
    <reaction evidence="1">
        <text>(3S)-hydroxyoctanoyl-CoA + NAD(+) = 3-oxooctanoyl-CoA + NADH + H(+)</text>
        <dbReference type="Rhea" id="RHEA:31195"/>
        <dbReference type="ChEBI" id="CHEBI:15378"/>
        <dbReference type="ChEBI" id="CHEBI:57540"/>
        <dbReference type="ChEBI" id="CHEBI:57945"/>
        <dbReference type="ChEBI" id="CHEBI:62617"/>
        <dbReference type="ChEBI" id="CHEBI:62619"/>
    </reaction>
    <physiologicalReaction direction="left-to-right" evidence="1">
        <dbReference type="Rhea" id="RHEA:31196"/>
    </physiologicalReaction>
</comment>
<comment type="catalytic activity">
    <reaction evidence="1">
        <text>(3S)-hydroxydecanoyl-CoA + NAD(+) = 3-oxodecanoyl-CoA + NADH + H(+)</text>
        <dbReference type="Rhea" id="RHEA:31187"/>
        <dbReference type="ChEBI" id="CHEBI:15378"/>
        <dbReference type="ChEBI" id="CHEBI:57540"/>
        <dbReference type="ChEBI" id="CHEBI:57945"/>
        <dbReference type="ChEBI" id="CHEBI:62548"/>
        <dbReference type="ChEBI" id="CHEBI:62616"/>
    </reaction>
    <physiologicalReaction direction="left-to-right" evidence="1">
        <dbReference type="Rhea" id="RHEA:31188"/>
    </physiologicalReaction>
</comment>
<comment type="catalytic activity">
    <reaction evidence="1">
        <text>(3S)-3-hydroxydodecanoyl-CoA + NAD(+) = 3-oxododecanoyl-CoA + NADH + H(+)</text>
        <dbReference type="Rhea" id="RHEA:31179"/>
        <dbReference type="ChEBI" id="CHEBI:15378"/>
        <dbReference type="ChEBI" id="CHEBI:57540"/>
        <dbReference type="ChEBI" id="CHEBI:57945"/>
        <dbReference type="ChEBI" id="CHEBI:62558"/>
        <dbReference type="ChEBI" id="CHEBI:62615"/>
    </reaction>
    <physiologicalReaction direction="left-to-right" evidence="1">
        <dbReference type="Rhea" id="RHEA:31180"/>
    </physiologicalReaction>
</comment>
<comment type="catalytic activity">
    <reaction evidence="1">
        <text>(3S)-hydroxytetradecanoyl-CoA + NAD(+) = 3-oxotetradecanoyl-CoA + NADH + H(+)</text>
        <dbReference type="Rhea" id="RHEA:31167"/>
        <dbReference type="ChEBI" id="CHEBI:15378"/>
        <dbReference type="ChEBI" id="CHEBI:57540"/>
        <dbReference type="ChEBI" id="CHEBI:57945"/>
        <dbReference type="ChEBI" id="CHEBI:62543"/>
        <dbReference type="ChEBI" id="CHEBI:62614"/>
    </reaction>
    <physiologicalReaction direction="left-to-right" evidence="1">
        <dbReference type="Rhea" id="RHEA:31168"/>
    </physiologicalReaction>
</comment>
<comment type="catalytic activity">
    <reaction evidence="1">
        <text>(3S)-hydroxyhexadecanoyl-CoA + NAD(+) = 3-oxohexadecanoyl-CoA + NADH + H(+)</text>
        <dbReference type="Rhea" id="RHEA:31159"/>
        <dbReference type="ChEBI" id="CHEBI:15378"/>
        <dbReference type="ChEBI" id="CHEBI:57349"/>
        <dbReference type="ChEBI" id="CHEBI:57540"/>
        <dbReference type="ChEBI" id="CHEBI:57945"/>
        <dbReference type="ChEBI" id="CHEBI:62613"/>
    </reaction>
    <physiologicalReaction direction="left-to-right" evidence="1">
        <dbReference type="Rhea" id="RHEA:31160"/>
    </physiologicalReaction>
</comment>
<comment type="catalytic activity">
    <reaction evidence="1">
        <text>1'-[1,2-di-(9Z,12Z-octadecadienoyl)-sn-glycero-3-phospho]-3'-[1-(9Z,12Z-octadecadienoyl)-sn-glycero-3-phospho]-glycerol + hexadecanoyl-CoA = 1'-[1,2-di-(9Z,12Z-octadecadienoyl)-sn-glycero-3-phospho]-3'-[1-(9Z,12Z-octadecadienoyl)-2-hexadecanoyl-sn-glycero-3-phospho]-glycerol + CoA</text>
        <dbReference type="Rhea" id="RHEA:43680"/>
        <dbReference type="ChEBI" id="CHEBI:57287"/>
        <dbReference type="ChEBI" id="CHEBI:57379"/>
        <dbReference type="ChEBI" id="CHEBI:83580"/>
        <dbReference type="ChEBI" id="CHEBI:83583"/>
    </reaction>
    <physiologicalReaction direction="left-to-right" evidence="1">
        <dbReference type="Rhea" id="RHEA:43681"/>
    </physiologicalReaction>
</comment>
<comment type="catalytic activity">
    <reaction evidence="1">
        <text>1'-[1,2-di-(9Z,12Z-octadecadienoyl)-sn-glycero-3-phospho]-3'-[1-(9Z,12Z-octadecadienoyl)-sn-glycero-3-phospho]-glycerol + (9Z)-octadecenoyl-CoA = 1'-[1,2-di-(9Z,12Z-octadecadienoyl)-sn-glycero-3-phospho]-3'-[1-(9Z,12Z-octadecadienoyl)-2-(9Z-octadecenoyl)-sn-glycero-3-phospho]-glycerol + CoA</text>
        <dbReference type="Rhea" id="RHEA:43676"/>
        <dbReference type="ChEBI" id="CHEBI:57287"/>
        <dbReference type="ChEBI" id="CHEBI:57387"/>
        <dbReference type="ChEBI" id="CHEBI:83580"/>
        <dbReference type="ChEBI" id="CHEBI:83582"/>
    </reaction>
    <physiologicalReaction direction="left-to-right" evidence="1">
        <dbReference type="Rhea" id="RHEA:43677"/>
    </physiologicalReaction>
</comment>
<comment type="catalytic activity">
    <reaction evidence="1">
        <text>1'-[1,2-di-(9Z,12Z-octadecadienoyl)-sn-glycero-3-phospho]-3'-[1-(9Z,12Z-octadecadienoyl)-sn-glycero-3-phospho]-glycerol + (9Z,12Z)-octadecadienoyl-CoA = 1',3'-bis-[1,2-di-(9Z,12Z-octadecadienoyl)-sn-glycero-3-phospho]-glycerol + CoA</text>
        <dbReference type="Rhea" id="RHEA:43672"/>
        <dbReference type="ChEBI" id="CHEBI:57287"/>
        <dbReference type="ChEBI" id="CHEBI:57383"/>
        <dbReference type="ChEBI" id="CHEBI:83580"/>
        <dbReference type="ChEBI" id="CHEBI:83581"/>
    </reaction>
    <physiologicalReaction direction="left-to-right" evidence="1">
        <dbReference type="Rhea" id="RHEA:43673"/>
    </physiologicalReaction>
</comment>
<comment type="pathway">
    <text evidence="1">Lipid metabolism; fatty acid beta-oxidation.</text>
</comment>
<comment type="subunit">
    <text evidence="1 2 4">Heterotetramer of 2 alpha/HADHA and 2 beta/HADHB subunits; forms the mitochondrial trifunctional enzyme (By similarity). Also purified as higher order heterooligomers including a 4 alpha/HADHA and 4 beta/HADHB heterooligomer which physiological significance remains unclear (PubMed:1730633). The mitochondrial trifunctional enzyme interacts with MTLN (By similarity).</text>
</comment>
<comment type="subcellular location">
    <subcellularLocation>
        <location evidence="1">Mitochondrion</location>
    </subcellularLocation>
    <subcellularLocation>
        <location evidence="1">Mitochondrion inner membrane</location>
    </subcellularLocation>
    <text evidence="1">Protein stability and association with mitochondrion inner membrane do not require HADHB.</text>
</comment>
<comment type="similarity">
    <text evidence="5">In the N-terminal section; belongs to the enoyl-CoA hydratase/isomerase family.</text>
</comment>
<comment type="similarity">
    <text evidence="5">In the central section; belongs to the 3-hydroxyacyl-CoA dehydrogenase family.</text>
</comment>
<comment type="sequence caution" evidence="5">
    <conflict type="frameshift">
        <sequence resource="EMBL-CDS" id="BAA03939"/>
    </conflict>
</comment>